<protein>
    <recommendedName>
        <fullName evidence="1">Autonomous glycyl radical cofactor</fullName>
    </recommendedName>
</protein>
<organism>
    <name type="scientific">Escherichia coli O8 (strain IAI1)</name>
    <dbReference type="NCBI Taxonomy" id="585034"/>
    <lineage>
        <taxon>Bacteria</taxon>
        <taxon>Pseudomonadati</taxon>
        <taxon>Pseudomonadota</taxon>
        <taxon>Gammaproteobacteria</taxon>
        <taxon>Enterobacterales</taxon>
        <taxon>Enterobacteriaceae</taxon>
        <taxon>Escherichia</taxon>
    </lineage>
</organism>
<sequence length="127" mass="14284">MITGIQITKAANDDLLNSFWLLDSEKGEARCIVAKAGYAEDEVVAVSKLGDIEYREVPVEVKPEVRVEGGQHLNVNVLRRETLEDAVKHPEKYPQLTIRVSGYAVRFNSLTPEQQRDVIARTFTESL</sequence>
<comment type="function">
    <text evidence="1">Acts as a radical domain for damaged PFL and possibly other radical proteins.</text>
</comment>
<name>GRCA_ECO8A</name>
<accession>B7M8J4</accession>
<evidence type="ECO:0000255" key="1">
    <source>
        <dbReference type="HAMAP-Rule" id="MF_00806"/>
    </source>
</evidence>
<gene>
    <name evidence="1" type="primary">grcA</name>
    <name type="ordered locus">ECIAI1_2696</name>
</gene>
<reference key="1">
    <citation type="journal article" date="2009" name="PLoS Genet.">
        <title>Organised genome dynamics in the Escherichia coli species results in highly diverse adaptive paths.</title>
        <authorList>
            <person name="Touchon M."/>
            <person name="Hoede C."/>
            <person name="Tenaillon O."/>
            <person name="Barbe V."/>
            <person name="Baeriswyl S."/>
            <person name="Bidet P."/>
            <person name="Bingen E."/>
            <person name="Bonacorsi S."/>
            <person name="Bouchier C."/>
            <person name="Bouvet O."/>
            <person name="Calteau A."/>
            <person name="Chiapello H."/>
            <person name="Clermont O."/>
            <person name="Cruveiller S."/>
            <person name="Danchin A."/>
            <person name="Diard M."/>
            <person name="Dossat C."/>
            <person name="Karoui M.E."/>
            <person name="Frapy E."/>
            <person name="Garry L."/>
            <person name="Ghigo J.M."/>
            <person name="Gilles A.M."/>
            <person name="Johnson J."/>
            <person name="Le Bouguenec C."/>
            <person name="Lescat M."/>
            <person name="Mangenot S."/>
            <person name="Martinez-Jehanne V."/>
            <person name="Matic I."/>
            <person name="Nassif X."/>
            <person name="Oztas S."/>
            <person name="Petit M.A."/>
            <person name="Pichon C."/>
            <person name="Rouy Z."/>
            <person name="Ruf C.S."/>
            <person name="Schneider D."/>
            <person name="Tourret J."/>
            <person name="Vacherie B."/>
            <person name="Vallenet D."/>
            <person name="Medigue C."/>
            <person name="Rocha E.P.C."/>
            <person name="Denamur E."/>
        </authorList>
    </citation>
    <scope>NUCLEOTIDE SEQUENCE [LARGE SCALE GENOMIC DNA]</scope>
    <source>
        <strain>IAI1</strain>
    </source>
</reference>
<keyword id="KW-0007">Acetylation</keyword>
<keyword id="KW-0556">Organic radical</keyword>
<proteinExistence type="inferred from homology"/>
<dbReference type="EMBL" id="CU928160">
    <property type="protein sequence ID" value="CAQ99531.1"/>
    <property type="molecule type" value="Genomic_DNA"/>
</dbReference>
<dbReference type="RefSeq" id="WP_000627807.1">
    <property type="nucleotide sequence ID" value="NC_011741.1"/>
</dbReference>
<dbReference type="SMR" id="B7M8J4"/>
<dbReference type="GeneID" id="93774507"/>
<dbReference type="KEGG" id="ecr:ECIAI1_2696"/>
<dbReference type="HOGENOM" id="CLU_133780_0_0_6"/>
<dbReference type="GO" id="GO:0005829">
    <property type="term" value="C:cytosol"/>
    <property type="evidence" value="ECO:0007669"/>
    <property type="project" value="TreeGrafter"/>
</dbReference>
<dbReference type="GO" id="GO:0008861">
    <property type="term" value="F:formate C-acetyltransferase activity"/>
    <property type="evidence" value="ECO:0007669"/>
    <property type="project" value="TreeGrafter"/>
</dbReference>
<dbReference type="FunFam" id="3.20.70.20:FF:000002">
    <property type="entry name" value="Autonomous glycyl radical cofactor"/>
    <property type="match status" value="1"/>
</dbReference>
<dbReference type="Gene3D" id="3.20.70.20">
    <property type="match status" value="1"/>
</dbReference>
<dbReference type="HAMAP" id="MF_00806">
    <property type="entry name" value="GrcA"/>
    <property type="match status" value="1"/>
</dbReference>
<dbReference type="InterPro" id="IPR050244">
    <property type="entry name" value="Auton_GlycylRad_Cofactor"/>
</dbReference>
<dbReference type="InterPro" id="IPR019777">
    <property type="entry name" value="Form_AcTrfase_GR_CS"/>
</dbReference>
<dbReference type="InterPro" id="IPR001150">
    <property type="entry name" value="Gly_radical"/>
</dbReference>
<dbReference type="InterPro" id="IPR011140">
    <property type="entry name" value="Glycyl_radical_cofactor_GrcA"/>
</dbReference>
<dbReference type="NCBIfam" id="TIGR04365">
    <property type="entry name" value="spare_glycyl"/>
    <property type="match status" value="1"/>
</dbReference>
<dbReference type="PANTHER" id="PTHR30191">
    <property type="entry name" value="FORMATE ACETYLTRANSFERASE"/>
    <property type="match status" value="1"/>
</dbReference>
<dbReference type="PANTHER" id="PTHR30191:SF0">
    <property type="entry name" value="FORMATE ACETYLTRANSFERASE 1"/>
    <property type="match status" value="1"/>
</dbReference>
<dbReference type="Pfam" id="PF01228">
    <property type="entry name" value="Gly_radical"/>
    <property type="match status" value="1"/>
</dbReference>
<dbReference type="PIRSF" id="PIRSF000378">
    <property type="entry name" value="Gly_radicl_yfiD"/>
    <property type="match status" value="1"/>
</dbReference>
<dbReference type="SUPFAM" id="SSF51998">
    <property type="entry name" value="PFL-like glycyl radical enzymes"/>
    <property type="match status" value="1"/>
</dbReference>
<dbReference type="PROSITE" id="PS00850">
    <property type="entry name" value="GLY_RADICAL_1"/>
    <property type="match status" value="1"/>
</dbReference>
<dbReference type="PROSITE" id="PS51149">
    <property type="entry name" value="GLY_RADICAL_2"/>
    <property type="match status" value="1"/>
</dbReference>
<feature type="chain" id="PRO_1000133984" description="Autonomous glycyl radical cofactor">
    <location>
        <begin position="1"/>
        <end position="127"/>
    </location>
</feature>
<feature type="domain" description="Glycine radical" evidence="1">
    <location>
        <begin position="5"/>
        <end position="127"/>
    </location>
</feature>
<feature type="modified residue" description="N6-acetyllysine" evidence="1">
    <location>
        <position position="48"/>
    </location>
</feature>
<feature type="modified residue" description="N6-acetyllysine" evidence="1">
    <location>
        <position position="88"/>
    </location>
</feature>
<feature type="modified residue" description="N6-acetyllysine" evidence="1">
    <location>
        <position position="92"/>
    </location>
</feature>
<feature type="modified residue" description="Glycine radical" evidence="1">
    <location>
        <position position="102"/>
    </location>
</feature>